<proteinExistence type="evidence at transcript level"/>
<reference key="1">
    <citation type="submission" date="2005-04" db="EMBL/GenBank/DDBJ databases">
        <authorList>
            <consortium name="The German cDNA consortium"/>
        </authorList>
    </citation>
    <scope>NUCLEOTIDE SEQUENCE [LARGE SCALE MRNA]</scope>
    <source>
        <tissue>Brain cortex</tissue>
    </source>
</reference>
<gene>
    <name type="primary">RNPC3</name>
    <name type="synonym">RBM40</name>
</gene>
<accession>Q5R6C7</accession>
<protein>
    <recommendedName>
        <fullName>RNA-binding region-containing protein 3</fullName>
    </recommendedName>
    <alternativeName>
        <fullName>RNA-binding motif protein 40</fullName>
        <shortName>RNA-binding protein 40</shortName>
    </alternativeName>
</protein>
<name>RNPC3_PONAB</name>
<organism>
    <name type="scientific">Pongo abelii</name>
    <name type="common">Sumatran orangutan</name>
    <name type="synonym">Pongo pygmaeus abelii</name>
    <dbReference type="NCBI Taxonomy" id="9601"/>
    <lineage>
        <taxon>Eukaryota</taxon>
        <taxon>Metazoa</taxon>
        <taxon>Chordata</taxon>
        <taxon>Craniata</taxon>
        <taxon>Vertebrata</taxon>
        <taxon>Euteleostomi</taxon>
        <taxon>Mammalia</taxon>
        <taxon>Eutheria</taxon>
        <taxon>Euarchontoglires</taxon>
        <taxon>Primates</taxon>
        <taxon>Haplorrhini</taxon>
        <taxon>Catarrhini</taxon>
        <taxon>Hominidae</taxon>
        <taxon>Pongo</taxon>
    </lineage>
</organism>
<sequence length="517" mass="58604">MAAPEQPLAISRGCTSSSSLSPPRGDRTLLVRHLPAELTAEEKEDLLKYFGAQSVRVLSDKGRLKHTAFATFPNEKAAIKALTRLHQLKLLGHTLVVEFAKEQDRVHSPCPTSGSEKKKRSDDPVEDDKEKKELGYLTVENGIAPNHGLTFPLNSCLKYMYPPPSSTILANIVNALASVPKFYVQVLHLMNKMNLPTPFGPITARPPMYEDYMPLHAPLPPTSPQPPEEPPLPEEDEELSSEESEYESTDDEDRQRMNKLMELANLQPKRPKTIKQRHVRKKRKIKDMLNTPLCPSHSSLHPVLLPSDVFDQPQPVGNKRIEFHISTDMPAAFKKDLEKEQNCEEKNHDLPATEVDASNIGFGKIFPKPNLDITEEIKEDSDEMPSECISRRELEKGRISREEMETLSVFRSYEPGEPNCRIYVKNLAKHVEEKDLKYIFGRYVDFSSETRRIMFDIRLMKEGRMKGQAFVGLPNEKAAAKALKEANGYVLFGKPMVVQFARSARPKQDPKEGKRKC</sequence>
<comment type="function">
    <text evidence="1">Participates in pre-mRNA U12-dependent splicing, performed by the minor spliceosome which removes U12-type introns. U12-type introns comprises less than 1% of all non-coding sequences. Binds to the 3'-stem-loop of m(7)G-capped U12 snRNA (By similarity).</text>
</comment>
<comment type="subunit">
    <text evidence="1">Component of the U11/U12 snRNPs that are part of the U12-type spliceosome. Found in a complex with m(7)G-capped U12 snRNA. Interacts with PDCD7 (By similarity).</text>
</comment>
<comment type="subcellular location">
    <subcellularLocation>
        <location evidence="1">Nucleus</location>
    </subcellularLocation>
</comment>
<dbReference type="EMBL" id="CR860564">
    <property type="protein sequence ID" value="CAH92689.1"/>
    <property type="molecule type" value="mRNA"/>
</dbReference>
<dbReference type="RefSeq" id="NP_001126576.1">
    <property type="nucleotide sequence ID" value="NM_001133104.1"/>
</dbReference>
<dbReference type="SMR" id="Q5R6C7"/>
<dbReference type="FunCoup" id="Q5R6C7">
    <property type="interactions" value="2542"/>
</dbReference>
<dbReference type="STRING" id="9601.ENSPPYP00000001281"/>
<dbReference type="GeneID" id="100173567"/>
<dbReference type="KEGG" id="pon:100173567"/>
<dbReference type="CTD" id="55599"/>
<dbReference type="eggNOG" id="KOG4206">
    <property type="taxonomic scope" value="Eukaryota"/>
</dbReference>
<dbReference type="InParanoid" id="Q5R6C7"/>
<dbReference type="OrthoDB" id="277802at2759"/>
<dbReference type="Proteomes" id="UP000001595">
    <property type="component" value="Unplaced"/>
</dbReference>
<dbReference type="GO" id="GO:0005689">
    <property type="term" value="C:U12-type spliceosomal complex"/>
    <property type="evidence" value="ECO:0007669"/>
    <property type="project" value="TreeGrafter"/>
</dbReference>
<dbReference type="GO" id="GO:0097157">
    <property type="term" value="F:pre-mRNA intronic binding"/>
    <property type="evidence" value="ECO:0007669"/>
    <property type="project" value="TreeGrafter"/>
</dbReference>
<dbReference type="GO" id="GO:0030626">
    <property type="term" value="F:U12 snRNA binding"/>
    <property type="evidence" value="ECO:0007669"/>
    <property type="project" value="TreeGrafter"/>
</dbReference>
<dbReference type="GO" id="GO:0000398">
    <property type="term" value="P:mRNA splicing, via spliceosome"/>
    <property type="evidence" value="ECO:0007669"/>
    <property type="project" value="TreeGrafter"/>
</dbReference>
<dbReference type="CDD" id="cd12238">
    <property type="entry name" value="RRM1_RBM40_like"/>
    <property type="match status" value="1"/>
</dbReference>
<dbReference type="CDD" id="cd12239">
    <property type="entry name" value="RRM2_RBM40_like"/>
    <property type="match status" value="1"/>
</dbReference>
<dbReference type="FunFam" id="3.30.70.330:FF:000289">
    <property type="entry name" value="RNA-binding protein 40 isoform X1"/>
    <property type="match status" value="1"/>
</dbReference>
<dbReference type="FunFam" id="3.30.70.330:FF:000207">
    <property type="entry name" value="RNA-binding region (RNP1, RRM)-containing 3"/>
    <property type="match status" value="1"/>
</dbReference>
<dbReference type="Gene3D" id="3.30.70.330">
    <property type="match status" value="2"/>
</dbReference>
<dbReference type="Gene3D" id="6.10.250.610">
    <property type="match status" value="1"/>
</dbReference>
<dbReference type="InterPro" id="IPR012677">
    <property type="entry name" value="Nucleotide-bd_a/b_plait_sf"/>
</dbReference>
<dbReference type="InterPro" id="IPR035979">
    <property type="entry name" value="RBD_domain_sf"/>
</dbReference>
<dbReference type="InterPro" id="IPR034147">
    <property type="entry name" value="RBM40_RRM1"/>
</dbReference>
<dbReference type="InterPro" id="IPR045164">
    <property type="entry name" value="RBM41/RNPC3"/>
</dbReference>
<dbReference type="InterPro" id="IPR000504">
    <property type="entry name" value="RRM_dom"/>
</dbReference>
<dbReference type="PANTHER" id="PTHR16105">
    <property type="entry name" value="RNA-BINDING REGION-CONTAINING PROTEIN 3"/>
    <property type="match status" value="1"/>
</dbReference>
<dbReference type="PANTHER" id="PTHR16105:SF0">
    <property type="entry name" value="RNA-BINDING REGION-CONTAINING PROTEIN 3"/>
    <property type="match status" value="1"/>
</dbReference>
<dbReference type="Pfam" id="PF00076">
    <property type="entry name" value="RRM_1"/>
    <property type="match status" value="2"/>
</dbReference>
<dbReference type="SMART" id="SM00360">
    <property type="entry name" value="RRM"/>
    <property type="match status" value="2"/>
</dbReference>
<dbReference type="SUPFAM" id="SSF54928">
    <property type="entry name" value="RNA-binding domain, RBD"/>
    <property type="match status" value="2"/>
</dbReference>
<dbReference type="PROSITE" id="PS50102">
    <property type="entry name" value="RRM"/>
    <property type="match status" value="2"/>
</dbReference>
<evidence type="ECO:0000250" key="1"/>
<evidence type="ECO:0000250" key="2">
    <source>
        <dbReference type="UniProtKB" id="Q96LT9"/>
    </source>
</evidence>
<evidence type="ECO:0000255" key="3">
    <source>
        <dbReference type="PROSITE-ProRule" id="PRU00176"/>
    </source>
</evidence>
<evidence type="ECO:0000256" key="4">
    <source>
        <dbReference type="SAM" id="MobiDB-lite"/>
    </source>
</evidence>
<feature type="chain" id="PRO_0000311114" description="RNA-binding region-containing protein 3">
    <location>
        <begin position="1"/>
        <end position="517"/>
    </location>
</feature>
<feature type="domain" description="RRM 1" evidence="3">
    <location>
        <begin position="27"/>
        <end position="102"/>
    </location>
</feature>
<feature type="domain" description="RRM 2" evidence="3">
    <location>
        <begin position="420"/>
        <end position="503"/>
    </location>
</feature>
<feature type="region of interest" description="Disordered" evidence="4">
    <location>
        <begin position="1"/>
        <end position="26"/>
    </location>
</feature>
<feature type="region of interest" description="Disordered" evidence="4">
    <location>
        <begin position="106"/>
        <end position="130"/>
    </location>
</feature>
<feature type="region of interest" description="Disordered" evidence="4">
    <location>
        <begin position="213"/>
        <end position="254"/>
    </location>
</feature>
<feature type="compositionally biased region" description="Basic and acidic residues" evidence="4">
    <location>
        <begin position="115"/>
        <end position="130"/>
    </location>
</feature>
<feature type="compositionally biased region" description="Pro residues" evidence="4">
    <location>
        <begin position="217"/>
        <end position="230"/>
    </location>
</feature>
<feature type="compositionally biased region" description="Acidic residues" evidence="4">
    <location>
        <begin position="231"/>
        <end position="252"/>
    </location>
</feature>
<feature type="modified residue" description="Phosphoserine" evidence="2">
    <location>
        <position position="21"/>
    </location>
</feature>
<feature type="modified residue" description="Phosphoserine" evidence="2">
    <location>
        <position position="108"/>
    </location>
</feature>
<keyword id="KW-0539">Nucleus</keyword>
<keyword id="KW-0597">Phosphoprotein</keyword>
<keyword id="KW-1185">Reference proteome</keyword>
<keyword id="KW-0677">Repeat</keyword>
<keyword id="KW-0694">RNA-binding</keyword>